<name>CBP6_SCHPO</name>
<sequence length="103" mass="12395">MSLNQKITKAVALWPKDELRPWLSFPKTLDTSIRARLQKMPPQQANKQLNALNNLLDNVYWNKYIPKQVVLKPQFKPSYYESLTQIRRKEEKAPLWKRLFKRK</sequence>
<organism>
    <name type="scientific">Schizosaccharomyces pombe (strain 972 / ATCC 24843)</name>
    <name type="common">Fission yeast</name>
    <dbReference type="NCBI Taxonomy" id="284812"/>
    <lineage>
        <taxon>Eukaryota</taxon>
        <taxon>Fungi</taxon>
        <taxon>Dikarya</taxon>
        <taxon>Ascomycota</taxon>
        <taxon>Taphrinomycotina</taxon>
        <taxon>Schizosaccharomycetes</taxon>
        <taxon>Schizosaccharomycetales</taxon>
        <taxon>Schizosaccharomycetaceae</taxon>
        <taxon>Schizosaccharomyces</taxon>
    </lineage>
</organism>
<evidence type="ECO:0000250" key="1"/>
<evidence type="ECO:0000269" key="2">
    <source>
    </source>
</evidence>
<comment type="function">
    <text evidence="1">Involved in processing of the 5' terminus and the intervening sequences of cytochrome b pre-mRNA.</text>
</comment>
<comment type="subcellular location">
    <subcellularLocation>
        <location evidence="2">Mitochondrion</location>
    </subcellularLocation>
</comment>
<dbReference type="EMBL" id="CU329671">
    <property type="protein sequence ID" value="CAA17042.1"/>
    <property type="molecule type" value="Genomic_DNA"/>
</dbReference>
<dbReference type="PIR" id="T40768">
    <property type="entry name" value="T40768"/>
</dbReference>
<dbReference type="RefSeq" id="NP_595262.1">
    <property type="nucleotide sequence ID" value="NM_001021169.2"/>
</dbReference>
<dbReference type="SMR" id="O43089"/>
<dbReference type="BioGRID" id="277776">
    <property type="interactions" value="3"/>
</dbReference>
<dbReference type="FunCoup" id="O43089">
    <property type="interactions" value="156"/>
</dbReference>
<dbReference type="STRING" id="284812.O43089"/>
<dbReference type="PaxDb" id="4896-SPBC947.14c.1"/>
<dbReference type="EnsemblFungi" id="SPBC947.14c.1">
    <property type="protein sequence ID" value="SPBC947.14c.1:pep"/>
    <property type="gene ID" value="SPBC947.14c"/>
</dbReference>
<dbReference type="GeneID" id="2541262"/>
<dbReference type="KEGG" id="spo:2541262"/>
<dbReference type="PomBase" id="SPBC947.14c">
    <property type="gene designation" value="cbp6"/>
</dbReference>
<dbReference type="VEuPathDB" id="FungiDB:SPBC947.14c"/>
<dbReference type="HOGENOM" id="CLU_2265288_0_0_1"/>
<dbReference type="InParanoid" id="O43089"/>
<dbReference type="OMA" id="ENTYWNE"/>
<dbReference type="PRO" id="PR:O43089"/>
<dbReference type="Proteomes" id="UP000002485">
    <property type="component" value="Chromosome II"/>
</dbReference>
<dbReference type="GO" id="GO:0061671">
    <property type="term" value="C:Cbp3p-Cbp6 complex"/>
    <property type="evidence" value="ECO:0000318"/>
    <property type="project" value="GO_Central"/>
</dbReference>
<dbReference type="GO" id="GO:0005759">
    <property type="term" value="C:mitochondrial matrix"/>
    <property type="evidence" value="ECO:0000305"/>
    <property type="project" value="PomBase"/>
</dbReference>
<dbReference type="GO" id="GO:0005739">
    <property type="term" value="C:mitochondrion"/>
    <property type="evidence" value="ECO:0000314"/>
    <property type="project" value="PomBase"/>
</dbReference>
<dbReference type="GO" id="GO:0043022">
    <property type="term" value="F:ribosome binding"/>
    <property type="evidence" value="ECO:0007669"/>
    <property type="project" value="InterPro"/>
</dbReference>
<dbReference type="GO" id="GO:0034551">
    <property type="term" value="P:mitochondrial respiratory chain complex III assembly"/>
    <property type="evidence" value="ECO:0000315"/>
    <property type="project" value="PomBase"/>
</dbReference>
<dbReference type="GO" id="GO:0006397">
    <property type="term" value="P:mRNA processing"/>
    <property type="evidence" value="ECO:0007669"/>
    <property type="project" value="UniProtKB-KW"/>
</dbReference>
<dbReference type="InterPro" id="IPR037653">
    <property type="entry name" value="Cbp6"/>
</dbReference>
<dbReference type="PANTHER" id="PTHR28250">
    <property type="entry name" value="CYTOCHROME B PRE-MRNA-PROCESSING PROTEIN 6"/>
    <property type="match status" value="1"/>
</dbReference>
<dbReference type="PANTHER" id="PTHR28250:SF1">
    <property type="entry name" value="CYTOCHROME B PRE-MRNA-PROCESSING PROTEIN 6"/>
    <property type="match status" value="1"/>
</dbReference>
<dbReference type="Pfam" id="PF20180">
    <property type="entry name" value="UQCC2_CBP6"/>
    <property type="match status" value="1"/>
</dbReference>
<feature type="chain" id="PRO_0000116781" description="Cytochrome B pre-mRNA-processing protein 6">
    <location>
        <begin position="1"/>
        <end position="103"/>
    </location>
</feature>
<accession>O43089</accession>
<keyword id="KW-0496">Mitochondrion</keyword>
<keyword id="KW-0507">mRNA processing</keyword>
<keyword id="KW-1185">Reference proteome</keyword>
<proteinExistence type="inferred from homology"/>
<protein>
    <recommendedName>
        <fullName>Cytochrome B pre-mRNA-processing protein 6</fullName>
    </recommendedName>
</protein>
<reference key="1">
    <citation type="journal article" date="2002" name="Nature">
        <title>The genome sequence of Schizosaccharomyces pombe.</title>
        <authorList>
            <person name="Wood V."/>
            <person name="Gwilliam R."/>
            <person name="Rajandream M.A."/>
            <person name="Lyne M.H."/>
            <person name="Lyne R."/>
            <person name="Stewart A."/>
            <person name="Sgouros J.G."/>
            <person name="Peat N."/>
            <person name="Hayles J."/>
            <person name="Baker S.G."/>
            <person name="Basham D."/>
            <person name="Bowman S."/>
            <person name="Brooks K."/>
            <person name="Brown D."/>
            <person name="Brown S."/>
            <person name="Chillingworth T."/>
            <person name="Churcher C.M."/>
            <person name="Collins M."/>
            <person name="Connor R."/>
            <person name="Cronin A."/>
            <person name="Davis P."/>
            <person name="Feltwell T."/>
            <person name="Fraser A."/>
            <person name="Gentles S."/>
            <person name="Goble A."/>
            <person name="Hamlin N."/>
            <person name="Harris D.E."/>
            <person name="Hidalgo J."/>
            <person name="Hodgson G."/>
            <person name="Holroyd S."/>
            <person name="Hornsby T."/>
            <person name="Howarth S."/>
            <person name="Huckle E.J."/>
            <person name="Hunt S."/>
            <person name="Jagels K."/>
            <person name="James K.D."/>
            <person name="Jones L."/>
            <person name="Jones M."/>
            <person name="Leather S."/>
            <person name="McDonald S."/>
            <person name="McLean J."/>
            <person name="Mooney P."/>
            <person name="Moule S."/>
            <person name="Mungall K.L."/>
            <person name="Murphy L.D."/>
            <person name="Niblett D."/>
            <person name="Odell C."/>
            <person name="Oliver K."/>
            <person name="O'Neil S."/>
            <person name="Pearson D."/>
            <person name="Quail M.A."/>
            <person name="Rabbinowitsch E."/>
            <person name="Rutherford K.M."/>
            <person name="Rutter S."/>
            <person name="Saunders D."/>
            <person name="Seeger K."/>
            <person name="Sharp S."/>
            <person name="Skelton J."/>
            <person name="Simmonds M.N."/>
            <person name="Squares R."/>
            <person name="Squares S."/>
            <person name="Stevens K."/>
            <person name="Taylor K."/>
            <person name="Taylor R.G."/>
            <person name="Tivey A."/>
            <person name="Walsh S.V."/>
            <person name="Warren T."/>
            <person name="Whitehead S."/>
            <person name="Woodward J.R."/>
            <person name="Volckaert G."/>
            <person name="Aert R."/>
            <person name="Robben J."/>
            <person name="Grymonprez B."/>
            <person name="Weltjens I."/>
            <person name="Vanstreels E."/>
            <person name="Rieger M."/>
            <person name="Schaefer M."/>
            <person name="Mueller-Auer S."/>
            <person name="Gabel C."/>
            <person name="Fuchs M."/>
            <person name="Duesterhoeft A."/>
            <person name="Fritzc C."/>
            <person name="Holzer E."/>
            <person name="Moestl D."/>
            <person name="Hilbert H."/>
            <person name="Borzym K."/>
            <person name="Langer I."/>
            <person name="Beck A."/>
            <person name="Lehrach H."/>
            <person name="Reinhardt R."/>
            <person name="Pohl T.M."/>
            <person name="Eger P."/>
            <person name="Zimmermann W."/>
            <person name="Wedler H."/>
            <person name="Wambutt R."/>
            <person name="Purnelle B."/>
            <person name="Goffeau A."/>
            <person name="Cadieu E."/>
            <person name="Dreano S."/>
            <person name="Gloux S."/>
            <person name="Lelaure V."/>
            <person name="Mottier S."/>
            <person name="Galibert F."/>
            <person name="Aves S.J."/>
            <person name="Xiang Z."/>
            <person name="Hunt C."/>
            <person name="Moore K."/>
            <person name="Hurst S.M."/>
            <person name="Lucas M."/>
            <person name="Rochet M."/>
            <person name="Gaillardin C."/>
            <person name="Tallada V.A."/>
            <person name="Garzon A."/>
            <person name="Thode G."/>
            <person name="Daga R.R."/>
            <person name="Cruzado L."/>
            <person name="Jimenez J."/>
            <person name="Sanchez M."/>
            <person name="del Rey F."/>
            <person name="Benito J."/>
            <person name="Dominguez A."/>
            <person name="Revuelta J.L."/>
            <person name="Moreno S."/>
            <person name="Armstrong J."/>
            <person name="Forsburg S.L."/>
            <person name="Cerutti L."/>
            <person name="Lowe T."/>
            <person name="McCombie W.R."/>
            <person name="Paulsen I."/>
            <person name="Potashkin J."/>
            <person name="Shpakovski G.V."/>
            <person name="Ussery D."/>
            <person name="Barrell B.G."/>
            <person name="Nurse P."/>
        </authorList>
    </citation>
    <scope>NUCLEOTIDE SEQUENCE [LARGE SCALE GENOMIC DNA]</scope>
    <source>
        <strain>972 / ATCC 24843</strain>
    </source>
</reference>
<reference key="2">
    <citation type="journal article" date="2006" name="Nat. Biotechnol.">
        <title>ORFeome cloning and global analysis of protein localization in the fission yeast Schizosaccharomyces pombe.</title>
        <authorList>
            <person name="Matsuyama A."/>
            <person name="Arai R."/>
            <person name="Yashiroda Y."/>
            <person name="Shirai A."/>
            <person name="Kamata A."/>
            <person name="Sekido S."/>
            <person name="Kobayashi Y."/>
            <person name="Hashimoto A."/>
            <person name="Hamamoto M."/>
            <person name="Hiraoka Y."/>
            <person name="Horinouchi S."/>
            <person name="Yoshida M."/>
        </authorList>
    </citation>
    <scope>SUBCELLULAR LOCATION [LARGE SCALE ANALYSIS]</scope>
</reference>
<gene>
    <name type="primary">cbp6</name>
    <name type="ORF">SPBC947.14c</name>
</gene>